<geneLocation type="chloroplast"/>
<name>RR14_NANDO</name>
<proteinExistence type="inferred from homology"/>
<dbReference type="EMBL" id="DQ923117">
    <property type="protein sequence ID" value="ABI49861.1"/>
    <property type="molecule type" value="Genomic_DNA"/>
</dbReference>
<dbReference type="RefSeq" id="YP_740648.1">
    <property type="nucleotide sequence ID" value="NC_008336.1"/>
</dbReference>
<dbReference type="SMR" id="Q09FW3"/>
<dbReference type="GeneID" id="4271589"/>
<dbReference type="GO" id="GO:0009507">
    <property type="term" value="C:chloroplast"/>
    <property type="evidence" value="ECO:0007669"/>
    <property type="project" value="UniProtKB-SubCell"/>
</dbReference>
<dbReference type="GO" id="GO:0015935">
    <property type="term" value="C:small ribosomal subunit"/>
    <property type="evidence" value="ECO:0007669"/>
    <property type="project" value="TreeGrafter"/>
</dbReference>
<dbReference type="GO" id="GO:0019843">
    <property type="term" value="F:rRNA binding"/>
    <property type="evidence" value="ECO:0007669"/>
    <property type="project" value="UniProtKB-UniRule"/>
</dbReference>
<dbReference type="GO" id="GO:0003735">
    <property type="term" value="F:structural constituent of ribosome"/>
    <property type="evidence" value="ECO:0007669"/>
    <property type="project" value="InterPro"/>
</dbReference>
<dbReference type="GO" id="GO:0006412">
    <property type="term" value="P:translation"/>
    <property type="evidence" value="ECO:0007669"/>
    <property type="project" value="UniProtKB-UniRule"/>
</dbReference>
<dbReference type="FunFam" id="1.10.287.1480:FF:000001">
    <property type="entry name" value="30S ribosomal protein S14"/>
    <property type="match status" value="1"/>
</dbReference>
<dbReference type="Gene3D" id="1.10.287.1480">
    <property type="match status" value="1"/>
</dbReference>
<dbReference type="HAMAP" id="MF_00537">
    <property type="entry name" value="Ribosomal_uS14_1"/>
    <property type="match status" value="1"/>
</dbReference>
<dbReference type="InterPro" id="IPR001209">
    <property type="entry name" value="Ribosomal_uS14"/>
</dbReference>
<dbReference type="InterPro" id="IPR023036">
    <property type="entry name" value="Ribosomal_uS14_bac/plastid"/>
</dbReference>
<dbReference type="InterPro" id="IPR018271">
    <property type="entry name" value="Ribosomal_uS14_CS"/>
</dbReference>
<dbReference type="NCBIfam" id="NF006477">
    <property type="entry name" value="PRK08881.1"/>
    <property type="match status" value="1"/>
</dbReference>
<dbReference type="PANTHER" id="PTHR19836">
    <property type="entry name" value="30S RIBOSOMAL PROTEIN S14"/>
    <property type="match status" value="1"/>
</dbReference>
<dbReference type="PANTHER" id="PTHR19836:SF19">
    <property type="entry name" value="SMALL RIBOSOMAL SUBUNIT PROTEIN US14M"/>
    <property type="match status" value="1"/>
</dbReference>
<dbReference type="Pfam" id="PF00253">
    <property type="entry name" value="Ribosomal_S14"/>
    <property type="match status" value="1"/>
</dbReference>
<dbReference type="SUPFAM" id="SSF57716">
    <property type="entry name" value="Glucocorticoid receptor-like (DNA-binding domain)"/>
    <property type="match status" value="1"/>
</dbReference>
<dbReference type="PROSITE" id="PS00527">
    <property type="entry name" value="RIBOSOMAL_S14"/>
    <property type="match status" value="1"/>
</dbReference>
<evidence type="ECO:0000255" key="1">
    <source>
        <dbReference type="HAMAP-Rule" id="MF_00537"/>
    </source>
</evidence>
<evidence type="ECO:0000256" key="2">
    <source>
        <dbReference type="SAM" id="MobiDB-lite"/>
    </source>
</evidence>
<evidence type="ECO:0000305" key="3"/>
<comment type="function">
    <text evidence="1">Binds 16S rRNA, required for the assembly of 30S particles.</text>
</comment>
<comment type="subunit">
    <text evidence="1">Part of the 30S ribosomal subunit.</text>
</comment>
<comment type="subcellular location">
    <subcellularLocation>
        <location>Plastid</location>
        <location>Chloroplast</location>
    </subcellularLocation>
</comment>
<comment type="similarity">
    <text evidence="1">Belongs to the universal ribosomal protein uS14 family.</text>
</comment>
<feature type="chain" id="PRO_0000354427" description="Small ribosomal subunit protein uS14c">
    <location>
        <begin position="1"/>
        <end position="100"/>
    </location>
</feature>
<feature type="region of interest" description="Disordered" evidence="2">
    <location>
        <begin position="28"/>
        <end position="59"/>
    </location>
</feature>
<feature type="compositionally biased region" description="Basic and acidic residues" evidence="2">
    <location>
        <begin position="28"/>
        <end position="45"/>
    </location>
</feature>
<accession>Q09FW3</accession>
<gene>
    <name evidence="1" type="primary">rps14</name>
</gene>
<sequence length="100" mass="11747">MARKSLIQREKKRQRLEQKYHLIRRSSKKEIKKVPSLSEKMEIHGKLQSPPRNSAPTRLHRRCFSTGRPRATYRDFGLSGHILREMLHACLLPGATRSSW</sequence>
<reference key="1">
    <citation type="journal article" date="2006" name="BMC Plant Biol.">
        <title>Rapid and accurate pyrosequencing of angiosperm plastid genomes.</title>
        <authorList>
            <person name="Moore M.J."/>
            <person name="Dhingra A."/>
            <person name="Soltis P.S."/>
            <person name="Shaw R."/>
            <person name="Farmerie W.G."/>
            <person name="Folta K.M."/>
            <person name="Soltis D.E."/>
        </authorList>
    </citation>
    <scope>NUCLEOTIDE SEQUENCE [LARGE SCALE GENOMIC DNA]</scope>
</reference>
<organism>
    <name type="scientific">Nandina domestica</name>
    <name type="common">Heavenly bamboo</name>
    <dbReference type="NCBI Taxonomy" id="41776"/>
    <lineage>
        <taxon>Eukaryota</taxon>
        <taxon>Viridiplantae</taxon>
        <taxon>Streptophyta</taxon>
        <taxon>Embryophyta</taxon>
        <taxon>Tracheophyta</taxon>
        <taxon>Spermatophyta</taxon>
        <taxon>Magnoliopsida</taxon>
        <taxon>Ranunculales</taxon>
        <taxon>Berberidaceae</taxon>
        <taxon>Nandinoideae</taxon>
        <taxon>Nandineae</taxon>
        <taxon>Nandina</taxon>
    </lineage>
</organism>
<protein>
    <recommendedName>
        <fullName evidence="1">Small ribosomal subunit protein uS14c</fullName>
    </recommendedName>
    <alternativeName>
        <fullName evidence="3">30S ribosomal protein S14, chloroplastic</fullName>
    </alternativeName>
</protein>
<keyword id="KW-0150">Chloroplast</keyword>
<keyword id="KW-0934">Plastid</keyword>
<keyword id="KW-0687">Ribonucleoprotein</keyword>
<keyword id="KW-0689">Ribosomal protein</keyword>
<keyword id="KW-0694">RNA-binding</keyword>
<keyword id="KW-0699">rRNA-binding</keyword>